<keyword id="KW-0131">Cell cycle</keyword>
<keyword id="KW-0132">Cell division</keyword>
<keyword id="KW-0137">Centromere</keyword>
<keyword id="KW-0158">Chromosome</keyword>
<keyword id="KW-0159">Chromosome partition</keyword>
<keyword id="KW-0175">Coiled coil</keyword>
<keyword id="KW-0539">Nucleus</keyword>
<keyword id="KW-1185">Reference proteome</keyword>
<dbReference type="EMBL" id="HE600976">
    <property type="protein sequence ID" value="CAP35267.1"/>
    <property type="molecule type" value="Genomic_DNA"/>
</dbReference>
<dbReference type="SMR" id="Q60ZS1"/>
<dbReference type="FunCoup" id="Q60ZS1">
    <property type="interactions" value="1314"/>
</dbReference>
<dbReference type="STRING" id="6238.Q60ZS1"/>
<dbReference type="KEGG" id="cbr:CBG_17678"/>
<dbReference type="CTD" id="8576330"/>
<dbReference type="WormBase" id="CBG17678">
    <property type="protein sequence ID" value="CBP41617"/>
    <property type="gene ID" value="WBGene00037243"/>
    <property type="gene designation" value="Cbr-sgo-1"/>
</dbReference>
<dbReference type="eggNOG" id="ENOG502RT7Z">
    <property type="taxonomic scope" value="Eukaryota"/>
</dbReference>
<dbReference type="HOGENOM" id="CLU_858533_0_0_1"/>
<dbReference type="InParanoid" id="Q60ZS1"/>
<dbReference type="OMA" id="DEPMPFI"/>
<dbReference type="Proteomes" id="UP000008549">
    <property type="component" value="Unassembled WGS sequence"/>
</dbReference>
<dbReference type="GO" id="GO:0000779">
    <property type="term" value="C:condensed chromosome, centromeric region"/>
    <property type="evidence" value="ECO:0007669"/>
    <property type="project" value="UniProtKB-ARBA"/>
</dbReference>
<dbReference type="GO" id="GO:0005634">
    <property type="term" value="C:nucleus"/>
    <property type="evidence" value="ECO:0007669"/>
    <property type="project" value="UniProtKB-SubCell"/>
</dbReference>
<dbReference type="GO" id="GO:0051301">
    <property type="term" value="P:cell division"/>
    <property type="evidence" value="ECO:0007669"/>
    <property type="project" value="UniProtKB-KW"/>
</dbReference>
<dbReference type="GO" id="GO:0045132">
    <property type="term" value="P:meiotic chromosome segregation"/>
    <property type="evidence" value="ECO:0007669"/>
    <property type="project" value="InterPro"/>
</dbReference>
<dbReference type="InterPro" id="IPR011515">
    <property type="entry name" value="Shugoshin_C"/>
</dbReference>
<dbReference type="InterPro" id="IPR011516">
    <property type="entry name" value="Shugoshin_N"/>
</dbReference>
<dbReference type="Pfam" id="PF07557">
    <property type="entry name" value="Shugoshin_C"/>
    <property type="match status" value="1"/>
</dbReference>
<dbReference type="Pfam" id="PF07558">
    <property type="entry name" value="Shugoshin_N"/>
    <property type="match status" value="1"/>
</dbReference>
<accession>Q60ZS1</accession>
<accession>A8XRJ3</accession>
<proteinExistence type="inferred from homology"/>
<name>SGO1_CAEBR</name>
<evidence type="ECO:0000250" key="1"/>
<evidence type="ECO:0000255" key="2"/>
<evidence type="ECO:0000256" key="3">
    <source>
        <dbReference type="SAM" id="MobiDB-lite"/>
    </source>
</evidence>
<evidence type="ECO:0000305" key="4"/>
<gene>
    <name type="primary">sgo-1</name>
    <name type="ORF">CBG17678</name>
</gene>
<organism>
    <name type="scientific">Caenorhabditis briggsae</name>
    <dbReference type="NCBI Taxonomy" id="6238"/>
    <lineage>
        <taxon>Eukaryota</taxon>
        <taxon>Metazoa</taxon>
        <taxon>Ecdysozoa</taxon>
        <taxon>Nematoda</taxon>
        <taxon>Chromadorea</taxon>
        <taxon>Rhabditida</taxon>
        <taxon>Rhabditina</taxon>
        <taxon>Rhabditomorpha</taxon>
        <taxon>Rhabditoidea</taxon>
        <taxon>Rhabditidae</taxon>
        <taxon>Peloderinae</taxon>
        <taxon>Caenorhabditis</taxon>
    </lineage>
</organism>
<protein>
    <recommendedName>
        <fullName>Shugoshin</fullName>
    </recommendedName>
</protein>
<feature type="chain" id="PRO_0000055441" description="Shugoshin">
    <location>
        <begin position="1"/>
        <end position="306"/>
    </location>
</feature>
<feature type="region of interest" description="Disordered" evidence="3">
    <location>
        <begin position="122"/>
        <end position="196"/>
    </location>
</feature>
<feature type="region of interest" description="Disordered" evidence="3">
    <location>
        <begin position="223"/>
        <end position="306"/>
    </location>
</feature>
<feature type="coiled-coil region" evidence="2">
    <location>
        <begin position="28"/>
        <end position="75"/>
    </location>
</feature>
<feature type="compositionally biased region" description="Basic and acidic residues" evidence="3">
    <location>
        <begin position="133"/>
        <end position="161"/>
    </location>
</feature>
<feature type="compositionally biased region" description="Polar residues" evidence="3">
    <location>
        <begin position="167"/>
        <end position="181"/>
    </location>
</feature>
<feature type="compositionally biased region" description="Pro residues" evidence="3">
    <location>
        <begin position="230"/>
        <end position="241"/>
    </location>
</feature>
<reference key="1">
    <citation type="journal article" date="2003" name="PLoS Biol.">
        <title>The genome sequence of Caenorhabditis briggsae: a platform for comparative genomics.</title>
        <authorList>
            <person name="Stein L.D."/>
            <person name="Bao Z."/>
            <person name="Blasiar D."/>
            <person name="Blumenthal T."/>
            <person name="Brent M.R."/>
            <person name="Chen N."/>
            <person name="Chinwalla A."/>
            <person name="Clarke L."/>
            <person name="Clee C."/>
            <person name="Coghlan A."/>
            <person name="Coulson A."/>
            <person name="D'Eustachio P."/>
            <person name="Fitch D.H.A."/>
            <person name="Fulton L.A."/>
            <person name="Fulton R.E."/>
            <person name="Griffiths-Jones S."/>
            <person name="Harris T.W."/>
            <person name="Hillier L.W."/>
            <person name="Kamath R."/>
            <person name="Kuwabara P.E."/>
            <person name="Mardis E.R."/>
            <person name="Marra M.A."/>
            <person name="Miner T.L."/>
            <person name="Minx P."/>
            <person name="Mullikin J.C."/>
            <person name="Plumb R.W."/>
            <person name="Rogers J."/>
            <person name="Schein J.E."/>
            <person name="Sohrmann M."/>
            <person name="Spieth J."/>
            <person name="Stajich J.E."/>
            <person name="Wei C."/>
            <person name="Willey D."/>
            <person name="Wilson R.K."/>
            <person name="Durbin R.M."/>
            <person name="Waterston R.H."/>
        </authorList>
    </citation>
    <scope>NUCLEOTIDE SEQUENCE [LARGE SCALE GENOMIC DNA]</scope>
    <source>
        <strain>AF16</strain>
    </source>
</reference>
<sequence>MNAKAAQSLFGAIASSKKAPTREEPAVNFKSTNESLIKKNLQLKQQLSQCTKALEKLRNENIALREQNQELIDATLDEKMERIVEQRVKSRLAHAAVLHKKLVQNIQQTGLELGGIFKDMEPEPSGMVTRRAPKMECNLEKLDESPVRNFPRSDYEEENKSPMDIQNGPSSSSSMTQNLENGTPRMAQRASKGRRSELFHSLHENVPEEAAPAVGYKRAPLLIAPSETPGGPPKKAPPRKAPTPRFKKPSTPAPAPISDDAEMPSTVRRQRSAKMNIKSMKEPSVNSKLRRPGKHDEPMPFIDTFF</sequence>
<comment type="function">
    <text evidence="1">Plays a central role in chromosome cohesion during cell division by preventing premature dissociation of cohesin complex from centromeres after prophase, when most of cohesin complex dissociates from chromosomes arms.</text>
</comment>
<comment type="subcellular location">
    <subcellularLocation>
        <location evidence="1">Nucleus</location>
    </subcellularLocation>
    <subcellularLocation>
        <location evidence="1">Chromosome</location>
        <location evidence="1">Centromere</location>
    </subcellularLocation>
</comment>
<comment type="similarity">
    <text evidence="4">Belongs to the shugoshin family.</text>
</comment>